<evidence type="ECO:0000255" key="1">
    <source>
        <dbReference type="HAMAP-Rule" id="MF_00530"/>
    </source>
</evidence>
<comment type="function">
    <text evidence="1">Produces ATP from ADP in the presence of a proton gradient across the membrane.</text>
</comment>
<comment type="subunit">
    <text>F-type ATPases have 2 components, CF(1) - the catalytic core - and CF(0) - the membrane proton channel. CF(1) has five subunits: alpha(3), beta(3), gamma(1), delta(1), epsilon(1). CF(0) has three main subunits: a, b and c.</text>
</comment>
<comment type="subcellular location">
    <subcellularLocation>
        <location evidence="1">Cell inner membrane</location>
        <topology evidence="1">Peripheral membrane protein</topology>
    </subcellularLocation>
</comment>
<comment type="similarity">
    <text evidence="1">Belongs to the ATPase epsilon chain family.</text>
</comment>
<protein>
    <recommendedName>
        <fullName evidence="1">ATP synthase epsilon chain</fullName>
    </recommendedName>
    <alternativeName>
        <fullName evidence="1">ATP synthase F1 sector epsilon subunit</fullName>
    </alternativeName>
    <alternativeName>
        <fullName evidence="1">F-ATPase epsilon subunit</fullName>
    </alternativeName>
</protein>
<feature type="chain" id="PRO_0000188085" description="ATP synthase epsilon chain">
    <location>
        <begin position="1"/>
        <end position="139"/>
    </location>
</feature>
<accession>Q6FFJ9</accession>
<reference key="1">
    <citation type="journal article" date="2004" name="Nucleic Acids Res.">
        <title>Unique features revealed by the genome sequence of Acinetobacter sp. ADP1, a versatile and naturally transformation competent bacterium.</title>
        <authorList>
            <person name="Barbe V."/>
            <person name="Vallenet D."/>
            <person name="Fonknechten N."/>
            <person name="Kreimeyer A."/>
            <person name="Oztas S."/>
            <person name="Labarre L."/>
            <person name="Cruveiller S."/>
            <person name="Robert C."/>
            <person name="Duprat S."/>
            <person name="Wincker P."/>
            <person name="Ornston L.N."/>
            <person name="Weissenbach J."/>
            <person name="Marliere P."/>
            <person name="Cohen G.N."/>
            <person name="Medigue C."/>
        </authorList>
    </citation>
    <scope>NUCLEOTIDE SEQUENCE [LARGE SCALE GENOMIC DNA]</scope>
    <source>
        <strain>ATCC 33305 / BD413 / ADP1</strain>
    </source>
</reference>
<name>ATPE_ACIAD</name>
<gene>
    <name evidence="1" type="primary">atpC</name>
    <name type="ordered locus">ACIAD0188</name>
</gene>
<sequence>MATMQCDVVSVKESIYSGQVTMLIAKGAGGELGILPGHAPLVTLLQPGPIRVQLENGTEEIVYVSGGVLEVQPHVVTVLADTAIRADNLDEAAILEARKNAEQLLANQKSDLDSAAALASLSEISGQLETIRKIKNRAL</sequence>
<organism>
    <name type="scientific">Acinetobacter baylyi (strain ATCC 33305 / BD413 / ADP1)</name>
    <dbReference type="NCBI Taxonomy" id="62977"/>
    <lineage>
        <taxon>Bacteria</taxon>
        <taxon>Pseudomonadati</taxon>
        <taxon>Pseudomonadota</taxon>
        <taxon>Gammaproteobacteria</taxon>
        <taxon>Moraxellales</taxon>
        <taxon>Moraxellaceae</taxon>
        <taxon>Acinetobacter</taxon>
    </lineage>
</organism>
<dbReference type="EMBL" id="CR543861">
    <property type="protein sequence ID" value="CAG67158.1"/>
    <property type="molecule type" value="Genomic_DNA"/>
</dbReference>
<dbReference type="RefSeq" id="WP_004930533.1">
    <property type="nucleotide sequence ID" value="NC_005966.1"/>
</dbReference>
<dbReference type="SMR" id="Q6FFJ9"/>
<dbReference type="STRING" id="202950.GCA_001485005_01918"/>
<dbReference type="GeneID" id="45232703"/>
<dbReference type="KEGG" id="aci:ACIAD0188"/>
<dbReference type="eggNOG" id="COG0355">
    <property type="taxonomic scope" value="Bacteria"/>
</dbReference>
<dbReference type="HOGENOM" id="CLU_084338_2_0_6"/>
<dbReference type="OrthoDB" id="9791445at2"/>
<dbReference type="BioCyc" id="ASP62977:ACIAD_RS00870-MONOMER"/>
<dbReference type="Proteomes" id="UP000000430">
    <property type="component" value="Chromosome"/>
</dbReference>
<dbReference type="GO" id="GO:0005886">
    <property type="term" value="C:plasma membrane"/>
    <property type="evidence" value="ECO:0007669"/>
    <property type="project" value="UniProtKB-SubCell"/>
</dbReference>
<dbReference type="GO" id="GO:0045259">
    <property type="term" value="C:proton-transporting ATP synthase complex"/>
    <property type="evidence" value="ECO:0007669"/>
    <property type="project" value="UniProtKB-KW"/>
</dbReference>
<dbReference type="GO" id="GO:0005524">
    <property type="term" value="F:ATP binding"/>
    <property type="evidence" value="ECO:0007669"/>
    <property type="project" value="UniProtKB-UniRule"/>
</dbReference>
<dbReference type="GO" id="GO:0046933">
    <property type="term" value="F:proton-transporting ATP synthase activity, rotational mechanism"/>
    <property type="evidence" value="ECO:0007669"/>
    <property type="project" value="UniProtKB-UniRule"/>
</dbReference>
<dbReference type="CDD" id="cd12152">
    <property type="entry name" value="F1-ATPase_delta"/>
    <property type="match status" value="1"/>
</dbReference>
<dbReference type="FunFam" id="2.60.15.10:FF:000001">
    <property type="entry name" value="ATP synthase epsilon chain"/>
    <property type="match status" value="1"/>
</dbReference>
<dbReference type="Gene3D" id="1.20.5.440">
    <property type="entry name" value="ATP synthase delta/epsilon subunit, C-terminal domain"/>
    <property type="match status" value="1"/>
</dbReference>
<dbReference type="Gene3D" id="2.60.15.10">
    <property type="entry name" value="F0F1 ATP synthase delta/epsilon subunit, N-terminal"/>
    <property type="match status" value="1"/>
</dbReference>
<dbReference type="HAMAP" id="MF_00530">
    <property type="entry name" value="ATP_synth_epsil_bac"/>
    <property type="match status" value="1"/>
</dbReference>
<dbReference type="InterPro" id="IPR036794">
    <property type="entry name" value="ATP_F1_dsu/esu_C_sf"/>
</dbReference>
<dbReference type="InterPro" id="IPR001469">
    <property type="entry name" value="ATP_synth_F1_dsu/esu"/>
</dbReference>
<dbReference type="InterPro" id="IPR020546">
    <property type="entry name" value="ATP_synth_F1_dsu/esu_N"/>
</dbReference>
<dbReference type="InterPro" id="IPR036771">
    <property type="entry name" value="ATPsynth_dsu/esu_N"/>
</dbReference>
<dbReference type="NCBIfam" id="TIGR01216">
    <property type="entry name" value="ATP_synt_epsi"/>
    <property type="match status" value="1"/>
</dbReference>
<dbReference type="NCBIfam" id="NF001847">
    <property type="entry name" value="PRK00571.1-4"/>
    <property type="match status" value="1"/>
</dbReference>
<dbReference type="PANTHER" id="PTHR13822">
    <property type="entry name" value="ATP SYNTHASE DELTA/EPSILON CHAIN"/>
    <property type="match status" value="1"/>
</dbReference>
<dbReference type="PANTHER" id="PTHR13822:SF10">
    <property type="entry name" value="ATP SYNTHASE EPSILON CHAIN, CHLOROPLASTIC"/>
    <property type="match status" value="1"/>
</dbReference>
<dbReference type="Pfam" id="PF02823">
    <property type="entry name" value="ATP-synt_DE_N"/>
    <property type="match status" value="1"/>
</dbReference>
<dbReference type="SUPFAM" id="SSF46604">
    <property type="entry name" value="Epsilon subunit of F1F0-ATP synthase C-terminal domain"/>
    <property type="match status" value="1"/>
</dbReference>
<dbReference type="SUPFAM" id="SSF51344">
    <property type="entry name" value="Epsilon subunit of F1F0-ATP synthase N-terminal domain"/>
    <property type="match status" value="1"/>
</dbReference>
<proteinExistence type="inferred from homology"/>
<keyword id="KW-0066">ATP synthesis</keyword>
<keyword id="KW-0997">Cell inner membrane</keyword>
<keyword id="KW-1003">Cell membrane</keyword>
<keyword id="KW-0139">CF(1)</keyword>
<keyword id="KW-0375">Hydrogen ion transport</keyword>
<keyword id="KW-0406">Ion transport</keyword>
<keyword id="KW-0472">Membrane</keyword>
<keyword id="KW-0813">Transport</keyword>